<feature type="chain" id="PRO_1000004363" description="UDP-N-acetylmuramate--L-alanine ligase">
    <location>
        <begin position="1"/>
        <end position="469"/>
    </location>
</feature>
<feature type="binding site" evidence="1">
    <location>
        <begin position="122"/>
        <end position="128"/>
    </location>
    <ligand>
        <name>ATP</name>
        <dbReference type="ChEBI" id="CHEBI:30616"/>
    </ligand>
</feature>
<name>MURC_LEGPC</name>
<proteinExistence type="inferred from homology"/>
<comment type="function">
    <text evidence="1">Cell wall formation.</text>
</comment>
<comment type="catalytic activity">
    <reaction evidence="1">
        <text>UDP-N-acetyl-alpha-D-muramate + L-alanine + ATP = UDP-N-acetyl-alpha-D-muramoyl-L-alanine + ADP + phosphate + H(+)</text>
        <dbReference type="Rhea" id="RHEA:23372"/>
        <dbReference type="ChEBI" id="CHEBI:15378"/>
        <dbReference type="ChEBI" id="CHEBI:30616"/>
        <dbReference type="ChEBI" id="CHEBI:43474"/>
        <dbReference type="ChEBI" id="CHEBI:57972"/>
        <dbReference type="ChEBI" id="CHEBI:70757"/>
        <dbReference type="ChEBI" id="CHEBI:83898"/>
        <dbReference type="ChEBI" id="CHEBI:456216"/>
        <dbReference type="EC" id="6.3.2.8"/>
    </reaction>
</comment>
<comment type="pathway">
    <text evidence="1">Cell wall biogenesis; peptidoglycan biosynthesis.</text>
</comment>
<comment type="subcellular location">
    <subcellularLocation>
        <location evidence="1">Cytoplasm</location>
    </subcellularLocation>
</comment>
<comment type="similarity">
    <text evidence="1">Belongs to the MurCDEF family.</text>
</comment>
<dbReference type="EC" id="6.3.2.8" evidence="1"/>
<dbReference type="EMBL" id="CP000675">
    <property type="protein sequence ID" value="ABQ54512.1"/>
    <property type="molecule type" value="Genomic_DNA"/>
</dbReference>
<dbReference type="RefSeq" id="WP_011947533.1">
    <property type="nucleotide sequence ID" value="NZ_JAPMSS010000010.1"/>
</dbReference>
<dbReference type="SMR" id="A5IAW2"/>
<dbReference type="KEGG" id="lpc:LPC_0527"/>
<dbReference type="HOGENOM" id="CLU_028104_2_2_6"/>
<dbReference type="UniPathway" id="UPA00219"/>
<dbReference type="GO" id="GO:0005737">
    <property type="term" value="C:cytoplasm"/>
    <property type="evidence" value="ECO:0007669"/>
    <property type="project" value="UniProtKB-SubCell"/>
</dbReference>
<dbReference type="GO" id="GO:0005524">
    <property type="term" value="F:ATP binding"/>
    <property type="evidence" value="ECO:0007669"/>
    <property type="project" value="UniProtKB-UniRule"/>
</dbReference>
<dbReference type="GO" id="GO:0008763">
    <property type="term" value="F:UDP-N-acetylmuramate-L-alanine ligase activity"/>
    <property type="evidence" value="ECO:0007669"/>
    <property type="project" value="UniProtKB-UniRule"/>
</dbReference>
<dbReference type="GO" id="GO:0051301">
    <property type="term" value="P:cell division"/>
    <property type="evidence" value="ECO:0007669"/>
    <property type="project" value="UniProtKB-KW"/>
</dbReference>
<dbReference type="GO" id="GO:0071555">
    <property type="term" value="P:cell wall organization"/>
    <property type="evidence" value="ECO:0007669"/>
    <property type="project" value="UniProtKB-KW"/>
</dbReference>
<dbReference type="GO" id="GO:0009252">
    <property type="term" value="P:peptidoglycan biosynthetic process"/>
    <property type="evidence" value="ECO:0007669"/>
    <property type="project" value="UniProtKB-UniRule"/>
</dbReference>
<dbReference type="GO" id="GO:0008360">
    <property type="term" value="P:regulation of cell shape"/>
    <property type="evidence" value="ECO:0007669"/>
    <property type="project" value="UniProtKB-KW"/>
</dbReference>
<dbReference type="FunFam" id="3.40.1190.10:FF:000001">
    <property type="entry name" value="UDP-N-acetylmuramate--L-alanine ligase"/>
    <property type="match status" value="1"/>
</dbReference>
<dbReference type="Gene3D" id="3.90.190.20">
    <property type="entry name" value="Mur ligase, C-terminal domain"/>
    <property type="match status" value="1"/>
</dbReference>
<dbReference type="Gene3D" id="3.40.1190.10">
    <property type="entry name" value="Mur-like, catalytic domain"/>
    <property type="match status" value="1"/>
</dbReference>
<dbReference type="Gene3D" id="3.40.50.720">
    <property type="entry name" value="NAD(P)-binding Rossmann-like Domain"/>
    <property type="match status" value="1"/>
</dbReference>
<dbReference type="HAMAP" id="MF_00046">
    <property type="entry name" value="MurC"/>
    <property type="match status" value="1"/>
</dbReference>
<dbReference type="InterPro" id="IPR036565">
    <property type="entry name" value="Mur-like_cat_sf"/>
</dbReference>
<dbReference type="InterPro" id="IPR004101">
    <property type="entry name" value="Mur_ligase_C"/>
</dbReference>
<dbReference type="InterPro" id="IPR036615">
    <property type="entry name" value="Mur_ligase_C_dom_sf"/>
</dbReference>
<dbReference type="InterPro" id="IPR013221">
    <property type="entry name" value="Mur_ligase_cen"/>
</dbReference>
<dbReference type="InterPro" id="IPR000713">
    <property type="entry name" value="Mur_ligase_N"/>
</dbReference>
<dbReference type="InterPro" id="IPR050061">
    <property type="entry name" value="MurCDEF_pg_biosynth"/>
</dbReference>
<dbReference type="InterPro" id="IPR005758">
    <property type="entry name" value="UDP-N-AcMur_Ala_ligase_MurC"/>
</dbReference>
<dbReference type="NCBIfam" id="TIGR01082">
    <property type="entry name" value="murC"/>
    <property type="match status" value="1"/>
</dbReference>
<dbReference type="PANTHER" id="PTHR43445:SF3">
    <property type="entry name" value="UDP-N-ACETYLMURAMATE--L-ALANINE LIGASE"/>
    <property type="match status" value="1"/>
</dbReference>
<dbReference type="PANTHER" id="PTHR43445">
    <property type="entry name" value="UDP-N-ACETYLMURAMATE--L-ALANINE LIGASE-RELATED"/>
    <property type="match status" value="1"/>
</dbReference>
<dbReference type="Pfam" id="PF01225">
    <property type="entry name" value="Mur_ligase"/>
    <property type="match status" value="1"/>
</dbReference>
<dbReference type="Pfam" id="PF02875">
    <property type="entry name" value="Mur_ligase_C"/>
    <property type="match status" value="1"/>
</dbReference>
<dbReference type="Pfam" id="PF08245">
    <property type="entry name" value="Mur_ligase_M"/>
    <property type="match status" value="1"/>
</dbReference>
<dbReference type="SUPFAM" id="SSF51984">
    <property type="entry name" value="MurCD N-terminal domain"/>
    <property type="match status" value="1"/>
</dbReference>
<dbReference type="SUPFAM" id="SSF53623">
    <property type="entry name" value="MurD-like peptide ligases, catalytic domain"/>
    <property type="match status" value="1"/>
</dbReference>
<dbReference type="SUPFAM" id="SSF53244">
    <property type="entry name" value="MurD-like peptide ligases, peptide-binding domain"/>
    <property type="match status" value="1"/>
</dbReference>
<protein>
    <recommendedName>
        <fullName evidence="1">UDP-N-acetylmuramate--L-alanine ligase</fullName>
        <ecNumber evidence="1">6.3.2.8</ecNumber>
    </recommendedName>
    <alternativeName>
        <fullName evidence="1">UDP-N-acetylmuramoyl-L-alanine synthetase</fullName>
    </alternativeName>
</protein>
<organism>
    <name type="scientific">Legionella pneumophila (strain Corby)</name>
    <dbReference type="NCBI Taxonomy" id="400673"/>
    <lineage>
        <taxon>Bacteria</taxon>
        <taxon>Pseudomonadati</taxon>
        <taxon>Pseudomonadota</taxon>
        <taxon>Gammaproteobacteria</taxon>
        <taxon>Legionellales</taxon>
        <taxon>Legionellaceae</taxon>
        <taxon>Legionella</taxon>
    </lineage>
</organism>
<gene>
    <name evidence="1" type="primary">murC</name>
    <name type="ordered locus">LPC_0527</name>
</gene>
<reference key="1">
    <citation type="submission" date="2006-11" db="EMBL/GenBank/DDBJ databases">
        <title>Identification and characterization of a new conjugation/ type IVA secretion system (trb/tra) of L. pneumophila Corby localized on a mobile genomic island.</title>
        <authorList>
            <person name="Gloeckner G."/>
            <person name="Albert-Weissenberger C."/>
            <person name="Weinmann E."/>
            <person name="Jacobi S."/>
            <person name="Schunder E."/>
            <person name="Steinert M."/>
            <person name="Buchrieser C."/>
            <person name="Hacker J."/>
            <person name="Heuner K."/>
        </authorList>
    </citation>
    <scope>NUCLEOTIDE SEQUENCE [LARGE SCALE GENOMIC DNA]</scope>
    <source>
        <strain>Corby</strain>
    </source>
</reference>
<sequence>MNNSEQFLSPRMGRVEQIHFVGIGGAGMCGIAEVLHNQGYRITGSDLGESGTVQRLRSLGIQVYIGHRLENIKGADVVVRSSAVDFNNPEIVAARELMIPVIPRAAMLAELMRFRHGIAIAGTHGKTTTTSLVSSLLAEGGLDPSFVIGGKLNSCGANAQLGKSAYFVVEADESDASFLFLKPMMAVVTNIDADHMDTYEGDFEKLRTTFLEFLHHLPFYGLAVVCLEDEEICRILPAIQRPTLTYGFKEEAHYRAINWTQKGMLSEFVVVRPAPHKQLTIQFQYPGRHNVLNALASIAIATELGVDDDSIVRGLQKFQGVGRRFQMLGEKQFEKGAAIIVDDYGHHPQEILSTIDAFRRVWPERRLVHVFQPHRYTRTQSLHRQFVDVLSLSDELLLMDIYAAGETAIPGVTSENLANEIRSRDKRVTIVSEQSLKATLDEFIKDGDVILMQGAGSIGQMAVNLMKNM</sequence>
<keyword id="KW-0067">ATP-binding</keyword>
<keyword id="KW-0131">Cell cycle</keyword>
<keyword id="KW-0132">Cell division</keyword>
<keyword id="KW-0133">Cell shape</keyword>
<keyword id="KW-0961">Cell wall biogenesis/degradation</keyword>
<keyword id="KW-0963">Cytoplasm</keyword>
<keyword id="KW-0436">Ligase</keyword>
<keyword id="KW-0547">Nucleotide-binding</keyword>
<keyword id="KW-0573">Peptidoglycan synthesis</keyword>
<evidence type="ECO:0000255" key="1">
    <source>
        <dbReference type="HAMAP-Rule" id="MF_00046"/>
    </source>
</evidence>
<accession>A5IAW2</accession>